<name>ATPE_MORIN</name>
<accession>Q09X11</accession>
<feature type="chain" id="PRO_0000275206" description="ATP synthase epsilon chain, chloroplastic">
    <location>
        <begin position="1"/>
        <end position="133"/>
    </location>
</feature>
<gene>
    <name evidence="1" type="primary">atpE</name>
    <name type="ordered locus">MoinCp027</name>
</gene>
<keyword id="KW-0066">ATP synthesis</keyword>
<keyword id="KW-0139">CF(1)</keyword>
<keyword id="KW-0150">Chloroplast</keyword>
<keyword id="KW-0375">Hydrogen ion transport</keyword>
<keyword id="KW-0406">Ion transport</keyword>
<keyword id="KW-0472">Membrane</keyword>
<keyword id="KW-0934">Plastid</keyword>
<keyword id="KW-0793">Thylakoid</keyword>
<keyword id="KW-0813">Transport</keyword>
<comment type="function">
    <text evidence="1">Produces ATP from ADP in the presence of a proton gradient across the membrane.</text>
</comment>
<comment type="subunit">
    <text evidence="1">F-type ATPases have 2 components, CF(1) - the catalytic core - and CF(0) - the membrane proton channel. CF(1) has five subunits: alpha(3), beta(3), gamma(1), delta(1), epsilon(1). CF(0) has three main subunits: a, b and c.</text>
</comment>
<comment type="subcellular location">
    <subcellularLocation>
        <location evidence="1">Plastid</location>
        <location evidence="1">Chloroplast thylakoid membrane</location>
        <topology evidence="1">Peripheral membrane protein</topology>
    </subcellularLocation>
</comment>
<comment type="similarity">
    <text evidence="1">Belongs to the ATPase epsilon chain family.</text>
</comment>
<geneLocation type="chloroplast"/>
<protein>
    <recommendedName>
        <fullName evidence="1">ATP synthase epsilon chain, chloroplastic</fullName>
    </recommendedName>
    <alternativeName>
        <fullName evidence="1">ATP synthase F1 sector epsilon subunit</fullName>
    </alternativeName>
    <alternativeName>
        <fullName evidence="1">F-ATPase epsilon subunit</fullName>
    </alternativeName>
</protein>
<proteinExistence type="inferred from homology"/>
<organism>
    <name type="scientific">Morus indica</name>
    <name type="common">Mulberry</name>
    <dbReference type="NCBI Taxonomy" id="248361"/>
    <lineage>
        <taxon>Eukaryota</taxon>
        <taxon>Viridiplantae</taxon>
        <taxon>Streptophyta</taxon>
        <taxon>Embryophyta</taxon>
        <taxon>Tracheophyta</taxon>
        <taxon>Spermatophyta</taxon>
        <taxon>Magnoliopsida</taxon>
        <taxon>eudicotyledons</taxon>
        <taxon>Gunneridae</taxon>
        <taxon>Pentapetalae</taxon>
        <taxon>rosids</taxon>
        <taxon>fabids</taxon>
        <taxon>Rosales</taxon>
        <taxon>Moraceae</taxon>
        <taxon>Moreae</taxon>
        <taxon>Morus</taxon>
    </lineage>
</organism>
<reference key="1">
    <citation type="submission" date="2005-09" db="EMBL/GenBank/DDBJ databases">
        <title>The chloroplast genome of mulberry: structural features and comparative analysis.</title>
        <authorList>
            <person name="Ravi V."/>
            <person name="Khurana J.P."/>
            <person name="Tyagi A.K."/>
            <person name="Khurana P."/>
        </authorList>
    </citation>
    <scope>NUCLEOTIDE SEQUENCE [LARGE SCALE GENOMIC DNA]</scope>
    <source>
        <strain>cv. K2</strain>
    </source>
</reference>
<dbReference type="EMBL" id="DQ226511">
    <property type="protein sequence ID" value="ABB20964.1"/>
    <property type="molecule type" value="Genomic_DNA"/>
</dbReference>
<dbReference type="RefSeq" id="YP_762267.1">
    <property type="nucleotide sequence ID" value="NC_008359.1"/>
</dbReference>
<dbReference type="SMR" id="Q09X11"/>
<dbReference type="GeneID" id="4290672"/>
<dbReference type="GO" id="GO:0009535">
    <property type="term" value="C:chloroplast thylakoid membrane"/>
    <property type="evidence" value="ECO:0007669"/>
    <property type="project" value="UniProtKB-SubCell"/>
</dbReference>
<dbReference type="GO" id="GO:0045259">
    <property type="term" value="C:proton-transporting ATP synthase complex"/>
    <property type="evidence" value="ECO:0007669"/>
    <property type="project" value="UniProtKB-KW"/>
</dbReference>
<dbReference type="GO" id="GO:0005524">
    <property type="term" value="F:ATP binding"/>
    <property type="evidence" value="ECO:0007669"/>
    <property type="project" value="UniProtKB-UniRule"/>
</dbReference>
<dbReference type="GO" id="GO:0046933">
    <property type="term" value="F:proton-transporting ATP synthase activity, rotational mechanism"/>
    <property type="evidence" value="ECO:0007669"/>
    <property type="project" value="UniProtKB-UniRule"/>
</dbReference>
<dbReference type="CDD" id="cd12152">
    <property type="entry name" value="F1-ATPase_delta"/>
    <property type="match status" value="1"/>
</dbReference>
<dbReference type="FunFam" id="2.60.15.10:FF:000002">
    <property type="entry name" value="ATP synthase epsilon chain, chloroplastic"/>
    <property type="match status" value="1"/>
</dbReference>
<dbReference type="Gene3D" id="6.10.140.480">
    <property type="match status" value="1"/>
</dbReference>
<dbReference type="Gene3D" id="2.60.15.10">
    <property type="entry name" value="F0F1 ATP synthase delta/epsilon subunit, N-terminal"/>
    <property type="match status" value="1"/>
</dbReference>
<dbReference type="HAMAP" id="MF_00530">
    <property type="entry name" value="ATP_synth_epsil_bac"/>
    <property type="match status" value="1"/>
</dbReference>
<dbReference type="InterPro" id="IPR001469">
    <property type="entry name" value="ATP_synth_F1_dsu/esu"/>
</dbReference>
<dbReference type="InterPro" id="IPR020546">
    <property type="entry name" value="ATP_synth_F1_dsu/esu_N"/>
</dbReference>
<dbReference type="InterPro" id="IPR020547">
    <property type="entry name" value="ATP_synth_F1_esu_C"/>
</dbReference>
<dbReference type="InterPro" id="IPR036771">
    <property type="entry name" value="ATPsynth_dsu/esu_N"/>
</dbReference>
<dbReference type="NCBIfam" id="TIGR01216">
    <property type="entry name" value="ATP_synt_epsi"/>
    <property type="match status" value="1"/>
</dbReference>
<dbReference type="PANTHER" id="PTHR13822">
    <property type="entry name" value="ATP SYNTHASE DELTA/EPSILON CHAIN"/>
    <property type="match status" value="1"/>
</dbReference>
<dbReference type="PANTHER" id="PTHR13822:SF10">
    <property type="entry name" value="ATP SYNTHASE EPSILON CHAIN, CHLOROPLASTIC"/>
    <property type="match status" value="1"/>
</dbReference>
<dbReference type="Pfam" id="PF00401">
    <property type="entry name" value="ATP-synt_DE"/>
    <property type="match status" value="1"/>
</dbReference>
<dbReference type="Pfam" id="PF02823">
    <property type="entry name" value="ATP-synt_DE_N"/>
    <property type="match status" value="1"/>
</dbReference>
<dbReference type="SUPFAM" id="SSF51344">
    <property type="entry name" value="Epsilon subunit of F1F0-ATP synthase N-terminal domain"/>
    <property type="match status" value="1"/>
</dbReference>
<sequence length="133" mass="14624">MTLNLCVLTPNRIVWDSEVKEIILSTNSGQIGILPNHAPIATAVDIGILRIRLNDQWLTMALMGGFARIGNNEITVLVNDAEKGSDIDPQEAQQTLEMAEANLSKAEGKRQTIEANLALRRARTRVEAINMMS</sequence>
<evidence type="ECO:0000255" key="1">
    <source>
        <dbReference type="HAMAP-Rule" id="MF_00530"/>
    </source>
</evidence>